<name>SYV_BACLD</name>
<gene>
    <name evidence="1" type="primary">valS</name>
    <name type="ordered locus">BLi02938</name>
    <name type="ordered locus">BL00631</name>
</gene>
<accession>Q65GK8</accession>
<accession>Q62S16</accession>
<organism>
    <name type="scientific">Bacillus licheniformis (strain ATCC 14580 / DSM 13 / JCM 2505 / CCUG 7422 / NBRC 12200 / NCIMB 9375 / NCTC 10341 / NRRL NRS-1264 / Gibson 46)</name>
    <dbReference type="NCBI Taxonomy" id="279010"/>
    <lineage>
        <taxon>Bacteria</taxon>
        <taxon>Bacillati</taxon>
        <taxon>Bacillota</taxon>
        <taxon>Bacilli</taxon>
        <taxon>Bacillales</taxon>
        <taxon>Bacillaceae</taxon>
        <taxon>Bacillus</taxon>
    </lineage>
</organism>
<sequence>MDNQELTMPTKYDPSAVEKDRYDYWVNGKFFEAKNDPEKEPYTVVIPPPNVTGKLHLGHAWDSTLQDIVTRMKRMQGYDVLWLPGMDHAGIATQAKVEAKLREEGKTRYDLGREKFLEETWNWKEEYADFIRSQWAKLGLGLDYSRERFTLDEGLSKAVREVFVKLYEKGLIYRGEYIINWDPATKTALSDIEVIYKDVQGAFYHMRYPLKDGSGSIEIATTRPETMLGDTAVAVHPEDERYKHLIGKTVILPITGREIPIVGDDYVDMEFGSGAVKITPAHDPNDFEIGNRHNLERILVMNEDGTMNDNALQYKGMDRFECRKQIVKDLQEEGVLFKIEEHTHSVGHSERSGAVVEPYLSTQWFVQMQPLADAAIELQKSEGKVNFVPDRFEKTYLHWMENIRDWCISRQLWWGHRIPAWYHKETGEIYVGVEAPEDAENWEQDKDVLDTWFSSALWPFSTMGWPDIDEEDFKRYYPTNVLVTGYDIIFFWVSRMIFQGIEFTGERPFKDVLIHGLIRDDQGRKMSKSLGNGVDPMDVIDKYGADSLRYFLATGSSPGQDLRFSFEKVESTWNFANKIWNASRFALMNMDGMTYEELDLSGEKSVADKWILTRLNETIETVTQLADKYEFGEVGRHLYNFIWDDFCDWYIEMAKLPLYGEDEAAKKTTRSILAYVLDQTMRLLHPFMPFLTEEIWQHLPHEGESITVAKWPEAVKEYTDTEAAADMKLLVEVIRAVRNIRSEVNTPLSKQIELYIKTSTPEIAERLEENRSYVERFTNPSLLQIGTDIQAVDKAMTAVVSGAELILPLEGLINIDEEISRLQKELDKLTKEVERVQKKLSNEGFMKKAPAHVIEEERAKEADYTAKREAVEKRIAELKN</sequence>
<dbReference type="EC" id="6.1.1.9" evidence="1"/>
<dbReference type="EMBL" id="AE017333">
    <property type="protein sequence ID" value="AAU41806.1"/>
    <property type="molecule type" value="Genomic_DNA"/>
</dbReference>
<dbReference type="EMBL" id="CP000002">
    <property type="protein sequence ID" value="AAU24444.1"/>
    <property type="molecule type" value="Genomic_DNA"/>
</dbReference>
<dbReference type="RefSeq" id="WP_009329289.1">
    <property type="nucleotide sequence ID" value="NC_006322.1"/>
</dbReference>
<dbReference type="SMR" id="Q65GK8"/>
<dbReference type="STRING" id="279010.BL00631"/>
<dbReference type="KEGG" id="bld:BLi02938"/>
<dbReference type="KEGG" id="bli:BL00631"/>
<dbReference type="eggNOG" id="COG0525">
    <property type="taxonomic scope" value="Bacteria"/>
</dbReference>
<dbReference type="HOGENOM" id="CLU_001493_0_2_9"/>
<dbReference type="Proteomes" id="UP000000606">
    <property type="component" value="Chromosome"/>
</dbReference>
<dbReference type="GO" id="GO:0005829">
    <property type="term" value="C:cytosol"/>
    <property type="evidence" value="ECO:0007669"/>
    <property type="project" value="TreeGrafter"/>
</dbReference>
<dbReference type="GO" id="GO:0002161">
    <property type="term" value="F:aminoacyl-tRNA deacylase activity"/>
    <property type="evidence" value="ECO:0007669"/>
    <property type="project" value="InterPro"/>
</dbReference>
<dbReference type="GO" id="GO:0005524">
    <property type="term" value="F:ATP binding"/>
    <property type="evidence" value="ECO:0007669"/>
    <property type="project" value="UniProtKB-UniRule"/>
</dbReference>
<dbReference type="GO" id="GO:0004832">
    <property type="term" value="F:valine-tRNA ligase activity"/>
    <property type="evidence" value="ECO:0007669"/>
    <property type="project" value="UniProtKB-UniRule"/>
</dbReference>
<dbReference type="GO" id="GO:0006438">
    <property type="term" value="P:valyl-tRNA aminoacylation"/>
    <property type="evidence" value="ECO:0007669"/>
    <property type="project" value="UniProtKB-UniRule"/>
</dbReference>
<dbReference type="CDD" id="cd07962">
    <property type="entry name" value="Anticodon_Ia_Val"/>
    <property type="match status" value="1"/>
</dbReference>
<dbReference type="CDD" id="cd00817">
    <property type="entry name" value="ValRS_core"/>
    <property type="match status" value="1"/>
</dbReference>
<dbReference type="FunFam" id="1.10.287.380:FF:000001">
    <property type="entry name" value="Valine--tRNA ligase"/>
    <property type="match status" value="1"/>
</dbReference>
<dbReference type="FunFam" id="1.10.730.10:FF:000014">
    <property type="entry name" value="Valine--tRNA ligase"/>
    <property type="match status" value="1"/>
</dbReference>
<dbReference type="FunFam" id="3.40.50.620:FF:000032">
    <property type="entry name" value="Valine--tRNA ligase"/>
    <property type="match status" value="1"/>
</dbReference>
<dbReference type="FunFam" id="3.40.50.620:FF:000098">
    <property type="entry name" value="Valine--tRNA ligase"/>
    <property type="match status" value="1"/>
</dbReference>
<dbReference type="FunFam" id="3.90.740.10:FF:000005">
    <property type="entry name" value="Valine--tRNA ligase, mitochondrial"/>
    <property type="match status" value="1"/>
</dbReference>
<dbReference type="Gene3D" id="3.40.50.620">
    <property type="entry name" value="HUPs"/>
    <property type="match status" value="3"/>
</dbReference>
<dbReference type="Gene3D" id="1.10.730.10">
    <property type="entry name" value="Isoleucyl-tRNA Synthetase, Domain 1"/>
    <property type="match status" value="1"/>
</dbReference>
<dbReference type="Gene3D" id="1.10.287.380">
    <property type="entry name" value="Valyl-tRNA synthetase, C-terminal domain"/>
    <property type="match status" value="1"/>
</dbReference>
<dbReference type="Gene3D" id="3.90.740.10">
    <property type="entry name" value="Valyl/Leucyl/Isoleucyl-tRNA synthetase, editing domain"/>
    <property type="match status" value="1"/>
</dbReference>
<dbReference type="HAMAP" id="MF_02004">
    <property type="entry name" value="Val_tRNA_synth_type1"/>
    <property type="match status" value="1"/>
</dbReference>
<dbReference type="InterPro" id="IPR001412">
    <property type="entry name" value="aa-tRNA-synth_I_CS"/>
</dbReference>
<dbReference type="InterPro" id="IPR002300">
    <property type="entry name" value="aa-tRNA-synth_Ia"/>
</dbReference>
<dbReference type="InterPro" id="IPR033705">
    <property type="entry name" value="Anticodon_Ia_Val"/>
</dbReference>
<dbReference type="InterPro" id="IPR013155">
    <property type="entry name" value="M/V/L/I-tRNA-synth_anticd-bd"/>
</dbReference>
<dbReference type="InterPro" id="IPR014729">
    <property type="entry name" value="Rossmann-like_a/b/a_fold"/>
</dbReference>
<dbReference type="InterPro" id="IPR010978">
    <property type="entry name" value="tRNA-bd_arm"/>
</dbReference>
<dbReference type="InterPro" id="IPR009080">
    <property type="entry name" value="tRNAsynth_Ia_anticodon-bd"/>
</dbReference>
<dbReference type="InterPro" id="IPR037118">
    <property type="entry name" value="Val-tRNA_synth_C_sf"/>
</dbReference>
<dbReference type="InterPro" id="IPR019499">
    <property type="entry name" value="Val-tRNA_synth_tRNA-bd"/>
</dbReference>
<dbReference type="InterPro" id="IPR009008">
    <property type="entry name" value="Val/Leu/Ile-tRNA-synth_edit"/>
</dbReference>
<dbReference type="InterPro" id="IPR002303">
    <property type="entry name" value="Valyl-tRNA_ligase"/>
</dbReference>
<dbReference type="NCBIfam" id="NF004349">
    <property type="entry name" value="PRK05729.1"/>
    <property type="match status" value="1"/>
</dbReference>
<dbReference type="NCBIfam" id="TIGR00422">
    <property type="entry name" value="valS"/>
    <property type="match status" value="1"/>
</dbReference>
<dbReference type="PANTHER" id="PTHR11946:SF93">
    <property type="entry name" value="VALINE--TRNA LIGASE, CHLOROPLASTIC_MITOCHONDRIAL 2"/>
    <property type="match status" value="1"/>
</dbReference>
<dbReference type="PANTHER" id="PTHR11946">
    <property type="entry name" value="VALYL-TRNA SYNTHETASES"/>
    <property type="match status" value="1"/>
</dbReference>
<dbReference type="Pfam" id="PF08264">
    <property type="entry name" value="Anticodon_1"/>
    <property type="match status" value="1"/>
</dbReference>
<dbReference type="Pfam" id="PF00133">
    <property type="entry name" value="tRNA-synt_1"/>
    <property type="match status" value="1"/>
</dbReference>
<dbReference type="Pfam" id="PF10458">
    <property type="entry name" value="Val_tRNA-synt_C"/>
    <property type="match status" value="1"/>
</dbReference>
<dbReference type="PRINTS" id="PR00986">
    <property type="entry name" value="TRNASYNTHVAL"/>
</dbReference>
<dbReference type="SUPFAM" id="SSF47323">
    <property type="entry name" value="Anticodon-binding domain of a subclass of class I aminoacyl-tRNA synthetases"/>
    <property type="match status" value="1"/>
</dbReference>
<dbReference type="SUPFAM" id="SSF52374">
    <property type="entry name" value="Nucleotidylyl transferase"/>
    <property type="match status" value="1"/>
</dbReference>
<dbReference type="SUPFAM" id="SSF46589">
    <property type="entry name" value="tRNA-binding arm"/>
    <property type="match status" value="1"/>
</dbReference>
<dbReference type="SUPFAM" id="SSF50677">
    <property type="entry name" value="ValRS/IleRS/LeuRS editing domain"/>
    <property type="match status" value="1"/>
</dbReference>
<dbReference type="PROSITE" id="PS00178">
    <property type="entry name" value="AA_TRNA_LIGASE_I"/>
    <property type="match status" value="1"/>
</dbReference>
<evidence type="ECO:0000255" key="1">
    <source>
        <dbReference type="HAMAP-Rule" id="MF_02004"/>
    </source>
</evidence>
<comment type="function">
    <text evidence="1">Catalyzes the attachment of valine to tRNA(Val). As ValRS can inadvertently accommodate and process structurally similar amino acids such as threonine, to avoid such errors, it has a 'posttransfer' editing activity that hydrolyzes mischarged Thr-tRNA(Val) in a tRNA-dependent manner.</text>
</comment>
<comment type="catalytic activity">
    <reaction evidence="1">
        <text>tRNA(Val) + L-valine + ATP = L-valyl-tRNA(Val) + AMP + diphosphate</text>
        <dbReference type="Rhea" id="RHEA:10704"/>
        <dbReference type="Rhea" id="RHEA-COMP:9672"/>
        <dbReference type="Rhea" id="RHEA-COMP:9708"/>
        <dbReference type="ChEBI" id="CHEBI:30616"/>
        <dbReference type="ChEBI" id="CHEBI:33019"/>
        <dbReference type="ChEBI" id="CHEBI:57762"/>
        <dbReference type="ChEBI" id="CHEBI:78442"/>
        <dbReference type="ChEBI" id="CHEBI:78537"/>
        <dbReference type="ChEBI" id="CHEBI:456215"/>
        <dbReference type="EC" id="6.1.1.9"/>
    </reaction>
</comment>
<comment type="subunit">
    <text evidence="1">Monomer.</text>
</comment>
<comment type="subcellular location">
    <subcellularLocation>
        <location evidence="1">Cytoplasm</location>
    </subcellularLocation>
</comment>
<comment type="domain">
    <text evidence="1">ValRS has two distinct active sites: one for aminoacylation and one for editing. The misactivated threonine is translocated from the active site to the editing site.</text>
</comment>
<comment type="domain">
    <text evidence="1">The C-terminal coiled-coil domain is crucial for aminoacylation activity.</text>
</comment>
<comment type="similarity">
    <text evidence="1">Belongs to the class-I aminoacyl-tRNA synthetase family. ValS type 1 subfamily.</text>
</comment>
<protein>
    <recommendedName>
        <fullName evidence="1">Valine--tRNA ligase</fullName>
        <ecNumber evidence="1">6.1.1.9</ecNumber>
    </recommendedName>
    <alternativeName>
        <fullName evidence="1">Valyl-tRNA synthetase</fullName>
        <shortName evidence="1">ValRS</shortName>
    </alternativeName>
</protein>
<proteinExistence type="inferred from homology"/>
<reference key="1">
    <citation type="journal article" date="2004" name="J. Mol. Microbiol. Biotechnol.">
        <title>The complete genome sequence of Bacillus licheniformis DSM13, an organism with great industrial potential.</title>
        <authorList>
            <person name="Veith B."/>
            <person name="Herzberg C."/>
            <person name="Steckel S."/>
            <person name="Feesche J."/>
            <person name="Maurer K.H."/>
            <person name="Ehrenreich P."/>
            <person name="Baeumer S."/>
            <person name="Henne A."/>
            <person name="Liesegang H."/>
            <person name="Merkl R."/>
            <person name="Ehrenreich A."/>
            <person name="Gottschalk G."/>
        </authorList>
    </citation>
    <scope>NUCLEOTIDE SEQUENCE [LARGE SCALE GENOMIC DNA]</scope>
    <source>
        <strain>ATCC 14580 / DSM 13 / JCM 2505 / CCUG 7422 / NBRC 12200 / NCIMB 9375 / NCTC 10341 / NRRL NRS-1264 / Gibson 46</strain>
    </source>
</reference>
<reference key="2">
    <citation type="journal article" date="2004" name="Genome Biol.">
        <title>Complete genome sequence of the industrial bacterium Bacillus licheniformis and comparisons with closely related Bacillus species.</title>
        <authorList>
            <person name="Rey M.W."/>
            <person name="Ramaiya P."/>
            <person name="Nelson B.A."/>
            <person name="Brody-Karpin S.D."/>
            <person name="Zaretsky E.J."/>
            <person name="Tang M."/>
            <person name="Lopez de Leon A."/>
            <person name="Xiang H."/>
            <person name="Gusti V."/>
            <person name="Clausen I.G."/>
            <person name="Olsen P.B."/>
            <person name="Rasmussen M.D."/>
            <person name="Andersen J.T."/>
            <person name="Joergensen P.L."/>
            <person name="Larsen T.S."/>
            <person name="Sorokin A."/>
            <person name="Bolotin A."/>
            <person name="Lapidus A."/>
            <person name="Galleron N."/>
            <person name="Ehrlich S.D."/>
            <person name="Berka R.M."/>
        </authorList>
    </citation>
    <scope>NUCLEOTIDE SEQUENCE [LARGE SCALE GENOMIC DNA]</scope>
    <source>
        <strain>ATCC 14580 / DSM 13 / JCM 2505 / CCUG 7422 / NBRC 12200 / NCIMB 9375 / NCTC 10341 / NRRL NRS-1264 / Gibson 46</strain>
    </source>
</reference>
<feature type="chain" id="PRO_0000224435" description="Valine--tRNA ligase">
    <location>
        <begin position="1"/>
        <end position="880"/>
    </location>
</feature>
<feature type="coiled-coil region" evidence="1">
    <location>
        <begin position="809"/>
        <end position="880"/>
    </location>
</feature>
<feature type="short sequence motif" description="'HIGH' region">
    <location>
        <begin position="49"/>
        <end position="59"/>
    </location>
</feature>
<feature type="short sequence motif" description="'KMSKS' region">
    <location>
        <begin position="525"/>
        <end position="529"/>
    </location>
</feature>
<feature type="binding site" evidence="1">
    <location>
        <position position="528"/>
    </location>
    <ligand>
        <name>ATP</name>
        <dbReference type="ChEBI" id="CHEBI:30616"/>
    </ligand>
</feature>
<keyword id="KW-0030">Aminoacyl-tRNA synthetase</keyword>
<keyword id="KW-0067">ATP-binding</keyword>
<keyword id="KW-0175">Coiled coil</keyword>
<keyword id="KW-0963">Cytoplasm</keyword>
<keyword id="KW-0436">Ligase</keyword>
<keyword id="KW-0547">Nucleotide-binding</keyword>
<keyword id="KW-0648">Protein biosynthesis</keyword>
<keyword id="KW-1185">Reference proteome</keyword>